<evidence type="ECO:0000255" key="1">
    <source>
        <dbReference type="HAMAP-Rule" id="MF_00530"/>
    </source>
</evidence>
<keyword id="KW-0066">ATP synthesis</keyword>
<keyword id="KW-0139">CF(1)</keyword>
<keyword id="KW-0150">Chloroplast</keyword>
<keyword id="KW-0375">Hydrogen ion transport</keyword>
<keyword id="KW-0406">Ion transport</keyword>
<keyword id="KW-0472">Membrane</keyword>
<keyword id="KW-0934">Plastid</keyword>
<keyword id="KW-0793">Thylakoid</keyword>
<keyword id="KW-0813">Transport</keyword>
<comment type="function">
    <text evidence="1">Produces ATP from ADP in the presence of a proton gradient across the membrane.</text>
</comment>
<comment type="subunit">
    <text evidence="1">F-type ATPases have 2 components, CF(1) - the catalytic core - and CF(0) - the membrane proton channel. CF(1) has five subunits: alpha(3), beta(3), gamma(1), delta(1), epsilon(1). CF(0) has three main subunits: a, b and c.</text>
</comment>
<comment type="subcellular location">
    <subcellularLocation>
        <location evidence="1">Plastid</location>
        <location evidence="1">Chloroplast thylakoid membrane</location>
        <topology evidence="1">Peripheral membrane protein</topology>
    </subcellularLocation>
</comment>
<comment type="similarity">
    <text evidence="1">Belongs to the ATPase epsilon chain family.</text>
</comment>
<gene>
    <name evidence="1" type="primary">atpE</name>
</gene>
<reference key="1">
    <citation type="journal article" date="2006" name="BMC Evol. Biol.">
        <title>Complete plastid genome sequences of Drimys, Liriodendron, and Piper: implications for the phylogenetic relationships of magnoliids.</title>
        <authorList>
            <person name="Cai Z."/>
            <person name="Penaflor C."/>
            <person name="Kuehl J.V."/>
            <person name="Leebens-Mack J."/>
            <person name="Carlson J.E."/>
            <person name="dePamphilis C.W."/>
            <person name="Boore J.L."/>
            <person name="Jansen R.K."/>
        </authorList>
    </citation>
    <scope>NUCLEOTIDE SEQUENCE [LARGE SCALE GENOMIC DNA]</scope>
</reference>
<accession>Q0G9L3</accession>
<proteinExistence type="inferred from homology"/>
<geneLocation type="chloroplast"/>
<name>ATPE_LIRTU</name>
<organism>
    <name type="scientific">Liriodendron tulipifera</name>
    <name type="common">Tuliptree</name>
    <name type="synonym">Tulip poplar</name>
    <dbReference type="NCBI Taxonomy" id="3415"/>
    <lineage>
        <taxon>Eukaryota</taxon>
        <taxon>Viridiplantae</taxon>
        <taxon>Streptophyta</taxon>
        <taxon>Embryophyta</taxon>
        <taxon>Tracheophyta</taxon>
        <taxon>Spermatophyta</taxon>
        <taxon>Magnoliopsida</taxon>
        <taxon>Magnoliidae</taxon>
        <taxon>Magnoliales</taxon>
        <taxon>Magnoliaceae</taxon>
        <taxon>Liriodendron</taxon>
    </lineage>
</organism>
<feature type="chain" id="PRO_0000275205" description="ATP synthase epsilon chain, chloroplastic">
    <location>
        <begin position="1"/>
        <end position="134"/>
    </location>
</feature>
<dbReference type="EMBL" id="DQ899947">
    <property type="protein sequence ID" value="ABI32515.1"/>
    <property type="molecule type" value="Genomic_DNA"/>
</dbReference>
<dbReference type="RefSeq" id="YP_740208.1">
    <property type="nucleotide sequence ID" value="NC_008326.1"/>
</dbReference>
<dbReference type="SMR" id="Q0G9L3"/>
<dbReference type="GeneID" id="4266630"/>
<dbReference type="GO" id="GO:0009535">
    <property type="term" value="C:chloroplast thylakoid membrane"/>
    <property type="evidence" value="ECO:0007669"/>
    <property type="project" value="UniProtKB-SubCell"/>
</dbReference>
<dbReference type="GO" id="GO:0045259">
    <property type="term" value="C:proton-transporting ATP synthase complex"/>
    <property type="evidence" value="ECO:0007669"/>
    <property type="project" value="UniProtKB-KW"/>
</dbReference>
<dbReference type="GO" id="GO:0005524">
    <property type="term" value="F:ATP binding"/>
    <property type="evidence" value="ECO:0007669"/>
    <property type="project" value="UniProtKB-UniRule"/>
</dbReference>
<dbReference type="GO" id="GO:0046933">
    <property type="term" value="F:proton-transporting ATP synthase activity, rotational mechanism"/>
    <property type="evidence" value="ECO:0007669"/>
    <property type="project" value="UniProtKB-UniRule"/>
</dbReference>
<dbReference type="CDD" id="cd12152">
    <property type="entry name" value="F1-ATPase_delta"/>
    <property type="match status" value="1"/>
</dbReference>
<dbReference type="FunFam" id="2.60.15.10:FF:000002">
    <property type="entry name" value="ATP synthase epsilon chain, chloroplastic"/>
    <property type="match status" value="1"/>
</dbReference>
<dbReference type="Gene3D" id="6.10.140.480">
    <property type="match status" value="1"/>
</dbReference>
<dbReference type="Gene3D" id="2.60.15.10">
    <property type="entry name" value="F0F1 ATP synthase delta/epsilon subunit, N-terminal"/>
    <property type="match status" value="1"/>
</dbReference>
<dbReference type="HAMAP" id="MF_00530">
    <property type="entry name" value="ATP_synth_epsil_bac"/>
    <property type="match status" value="1"/>
</dbReference>
<dbReference type="InterPro" id="IPR001469">
    <property type="entry name" value="ATP_synth_F1_dsu/esu"/>
</dbReference>
<dbReference type="InterPro" id="IPR020546">
    <property type="entry name" value="ATP_synth_F1_dsu/esu_N"/>
</dbReference>
<dbReference type="InterPro" id="IPR020547">
    <property type="entry name" value="ATP_synth_F1_esu_C"/>
</dbReference>
<dbReference type="InterPro" id="IPR036771">
    <property type="entry name" value="ATPsynth_dsu/esu_N"/>
</dbReference>
<dbReference type="NCBIfam" id="TIGR01216">
    <property type="entry name" value="ATP_synt_epsi"/>
    <property type="match status" value="1"/>
</dbReference>
<dbReference type="PANTHER" id="PTHR13822">
    <property type="entry name" value="ATP SYNTHASE DELTA/EPSILON CHAIN"/>
    <property type="match status" value="1"/>
</dbReference>
<dbReference type="PANTHER" id="PTHR13822:SF10">
    <property type="entry name" value="ATP SYNTHASE EPSILON CHAIN, CHLOROPLASTIC"/>
    <property type="match status" value="1"/>
</dbReference>
<dbReference type="Pfam" id="PF00401">
    <property type="entry name" value="ATP-synt_DE"/>
    <property type="match status" value="1"/>
</dbReference>
<dbReference type="Pfam" id="PF02823">
    <property type="entry name" value="ATP-synt_DE_N"/>
    <property type="match status" value="1"/>
</dbReference>
<dbReference type="SUPFAM" id="SSF51344">
    <property type="entry name" value="Epsilon subunit of F1F0-ATP synthase N-terminal domain"/>
    <property type="match status" value="1"/>
</dbReference>
<protein>
    <recommendedName>
        <fullName evidence="1">ATP synthase epsilon chain, chloroplastic</fullName>
    </recommendedName>
    <alternativeName>
        <fullName evidence="1">ATP synthase F1 sector epsilon subunit</fullName>
    </alternativeName>
    <alternativeName>
        <fullName evidence="1">F-ATPase epsilon subunit</fullName>
    </alternativeName>
</protein>
<sequence length="134" mass="14745">MTLNLCVLTPNRIIWDSEVKEIILSTNSGQIGVLPNHAPIATAVDIGILRVRLNDQWLTMALMGGFARIGNNEITILVNDAEKGSDIDPQEAQRTLEIAEANLSRAEGKRQAIEANLALRRARTRVEAINVISY</sequence>